<proteinExistence type="evidence at protein level"/>
<comment type="function">
    <text evidence="5">Hypertrehalosaemic factors are neuropeptides that elevate the level of trehalose in the hemolymph (trehalose is the major carbohydrate in the hemolymph of insects).</text>
</comment>
<comment type="subcellular location">
    <subcellularLocation>
        <location evidence="5">Secreted</location>
    </subcellularLocation>
</comment>
<comment type="similarity">
    <text evidence="2">Belongs to the AKH/HRTH/RPCH family.</text>
</comment>
<protein>
    <recommendedName>
        <fullName evidence="1">Hypertrehalosaemic factor</fullName>
    </recommendedName>
    <alternativeName>
        <fullName evidence="4">Adipokinetic hormone 1</fullName>
        <shortName evidence="4">LobDe-AKH-1</shortName>
    </alternativeName>
    <alternativeName>
        <fullName evidence="1">Hypertrehalosaemic neuropeptide</fullName>
    </alternativeName>
</protein>
<feature type="peptide" id="PRO_0000378653" description="Hypertrehalosaemic factor" evidence="3">
    <location>
        <begin position="1"/>
        <end position="10"/>
    </location>
</feature>
<feature type="modified residue" description="Pyrrolidone carboxylic acid" evidence="3">
    <location>
        <position position="1"/>
    </location>
</feature>
<feature type="modified residue" description="Threonine amide" evidence="3">
    <location>
        <position position="10"/>
    </location>
</feature>
<organism>
    <name type="scientific">Loboptera decipiens</name>
    <name type="common">Field cockroach</name>
    <dbReference type="NCBI Taxonomy" id="242713"/>
    <lineage>
        <taxon>Eukaryota</taxon>
        <taxon>Metazoa</taxon>
        <taxon>Ecdysozoa</taxon>
        <taxon>Arthropoda</taxon>
        <taxon>Hexapoda</taxon>
        <taxon>Insecta</taxon>
        <taxon>Pterygota</taxon>
        <taxon>Neoptera</taxon>
        <taxon>Polyneoptera</taxon>
        <taxon>Dictyoptera</taxon>
        <taxon>Blattodea</taxon>
        <taxon>Blaberoidea</taxon>
        <taxon>Blattellidae</taxon>
        <taxon>Loboptera</taxon>
    </lineage>
</organism>
<keyword id="KW-0027">Amidation</keyword>
<keyword id="KW-0903">Direct protein sequencing</keyword>
<keyword id="KW-0372">Hormone</keyword>
<keyword id="KW-0527">Neuropeptide</keyword>
<keyword id="KW-0873">Pyrrolidone carboxylic acid</keyword>
<keyword id="KW-0964">Secreted</keyword>
<dbReference type="GO" id="GO:0005576">
    <property type="term" value="C:extracellular region"/>
    <property type="evidence" value="ECO:0007669"/>
    <property type="project" value="UniProtKB-SubCell"/>
</dbReference>
<dbReference type="GO" id="GO:0005179">
    <property type="term" value="F:hormone activity"/>
    <property type="evidence" value="ECO:0007669"/>
    <property type="project" value="UniProtKB-KW"/>
</dbReference>
<dbReference type="GO" id="GO:0007218">
    <property type="term" value="P:neuropeptide signaling pathway"/>
    <property type="evidence" value="ECO:0007669"/>
    <property type="project" value="UniProtKB-KW"/>
</dbReference>
<dbReference type="InterPro" id="IPR002047">
    <property type="entry name" value="Adipokinetic_hormone_CS"/>
</dbReference>
<dbReference type="PROSITE" id="PS00256">
    <property type="entry name" value="AKH"/>
    <property type="match status" value="1"/>
</dbReference>
<accession>P85846</accession>
<sequence>QVNFSPGWGT</sequence>
<reference evidence="5" key="1">
    <citation type="journal article" date="2009" name="BMC Evol. Biol.">
        <title>A proteomic approach for studying insect phylogeny: CAPA peptides of ancient insect taxa (Dictyoptera, Blattoptera) as a test case.</title>
        <authorList>
            <person name="Roth S."/>
            <person name="Fromm B."/>
            <person name="Gaede G."/>
            <person name="Predel R."/>
        </authorList>
    </citation>
    <scope>PROTEIN SEQUENCE</scope>
    <scope>PYROGLUTAMATE FORMATION AT GLN-1</scope>
    <scope>AMIDATION AT THR-10</scope>
    <source>
        <tissue evidence="3">Corpora cardiaca</tissue>
    </source>
</reference>
<evidence type="ECO:0000250" key="1">
    <source>
        <dbReference type="UniProtKB" id="P67790"/>
    </source>
</evidence>
<evidence type="ECO:0000255" key="2"/>
<evidence type="ECO:0000269" key="3">
    <source>
    </source>
</evidence>
<evidence type="ECO:0000303" key="4">
    <source>
    </source>
</evidence>
<evidence type="ECO:0000305" key="5"/>
<name>HTF_LOBDE</name>